<sequence length="681" mass="75541">MENRNTHTHPESKADAPAVQSSSGLSSTKKKTDSEPTVSAGQTGLADATERDNRKQPVAPRGPERELRPTGSSQDGSGELPTQEPSARPRTTQDGPRELQAGPEQVQPSGDFVASEGRPQPAMQTKDQQKRWQSAEVKEILLAESCQGNTDHDLGKPRPSNSRSQPLKNNSPSEAGRPQVRLQEPMPAPGSGTHKDNPQEAVPPKPKVTAEEKKAPPVLPSVPGPRTHKDRGEAAEIRATLRLQPPPPPLPEERDTEKKELGQGQKQRQQALSAAGTQGPANSRRGFMKCLLEVEEQEEATHRRTLKSRGLTARRSPKTVTSVSTSGPISSSVPTLPLTLHEPSTSAPASVPSWVRPPAPGQTPIPMGSPGSVLPTSAQDQNWRWPEFLPQGNERTLTYAKILRQEPEEHSLFRMYQSWEERTEEHLTLKQEEAFRSYFDIFNGPGEVDARSLKNILLLIGFTFTPAQVEEALMSADVNGDGHVDFKDFLAVMTDTKRFFCSVEQNVLMDMSPRNPYTLFFEILSLLVEMLALPELALEEITNYYQKKLKEGSSKAREMESAMGGLRQRKKIPYNPQQVENLEVPERRVLRILSRLKQQNYAANLQSPYAQVPCIPLCPRLDKKAVRRKLASHNHSVLDQCVSTSLGPDFHGLFFQPGQQGSREHSSDSRKWLSSMPARTH</sequence>
<protein>
    <recommendedName>
        <fullName>Spermatogenesis-associated protein 21</fullName>
    </recommendedName>
</protein>
<accession>Q8BHW6</accession>
<proteinExistence type="evidence at transcript level"/>
<organism>
    <name type="scientific">Mus musculus</name>
    <name type="common">Mouse</name>
    <dbReference type="NCBI Taxonomy" id="10090"/>
    <lineage>
        <taxon>Eukaryota</taxon>
        <taxon>Metazoa</taxon>
        <taxon>Chordata</taxon>
        <taxon>Craniata</taxon>
        <taxon>Vertebrata</taxon>
        <taxon>Euteleostomi</taxon>
        <taxon>Mammalia</taxon>
        <taxon>Eutheria</taxon>
        <taxon>Euarchontoglires</taxon>
        <taxon>Glires</taxon>
        <taxon>Rodentia</taxon>
        <taxon>Myomorpha</taxon>
        <taxon>Muroidea</taxon>
        <taxon>Muridae</taxon>
        <taxon>Murinae</taxon>
        <taxon>Mus</taxon>
        <taxon>Mus</taxon>
    </lineage>
</organism>
<feature type="chain" id="PRO_0000330688" description="Spermatogenesis-associated protein 21">
    <location>
        <begin position="1"/>
        <end position="681"/>
    </location>
</feature>
<feature type="domain" description="EF-hand" evidence="2">
    <location>
        <begin position="464"/>
        <end position="499"/>
    </location>
</feature>
<feature type="region of interest" description="Disordered" evidence="3">
    <location>
        <begin position="1"/>
        <end position="284"/>
    </location>
</feature>
<feature type="region of interest" description="Disordered" evidence="3">
    <location>
        <begin position="298"/>
        <end position="336"/>
    </location>
</feature>
<feature type="region of interest" description="Disordered" evidence="3">
    <location>
        <begin position="653"/>
        <end position="681"/>
    </location>
</feature>
<feature type="compositionally biased region" description="Basic and acidic residues" evidence="3">
    <location>
        <begin position="1"/>
        <end position="14"/>
    </location>
</feature>
<feature type="compositionally biased region" description="Polar residues" evidence="3">
    <location>
        <begin position="83"/>
        <end position="94"/>
    </location>
</feature>
<feature type="compositionally biased region" description="Polar residues" evidence="3">
    <location>
        <begin position="159"/>
        <end position="173"/>
    </location>
</feature>
<feature type="compositionally biased region" description="Basic and acidic residues" evidence="3">
    <location>
        <begin position="251"/>
        <end position="261"/>
    </location>
</feature>
<feature type="compositionally biased region" description="Polar residues" evidence="3">
    <location>
        <begin position="264"/>
        <end position="281"/>
    </location>
</feature>
<feature type="compositionally biased region" description="Low complexity" evidence="3">
    <location>
        <begin position="319"/>
        <end position="335"/>
    </location>
</feature>
<feature type="compositionally biased region" description="Basic and acidic residues" evidence="3">
    <location>
        <begin position="662"/>
        <end position="671"/>
    </location>
</feature>
<feature type="binding site" evidence="2">
    <location>
        <position position="477"/>
    </location>
    <ligand>
        <name>Ca(2+)</name>
        <dbReference type="ChEBI" id="CHEBI:29108"/>
    </ligand>
</feature>
<feature type="binding site" evidence="2">
    <location>
        <position position="479"/>
    </location>
    <ligand>
        <name>Ca(2+)</name>
        <dbReference type="ChEBI" id="CHEBI:29108"/>
    </ligand>
</feature>
<feature type="binding site" evidence="2">
    <location>
        <position position="481"/>
    </location>
    <ligand>
        <name>Ca(2+)</name>
        <dbReference type="ChEBI" id="CHEBI:29108"/>
    </ligand>
</feature>
<feature type="binding site" evidence="2">
    <location>
        <position position="483"/>
    </location>
    <ligand>
        <name>Ca(2+)</name>
        <dbReference type="ChEBI" id="CHEBI:29108"/>
    </ligand>
</feature>
<feature type="binding site" evidence="2">
    <location>
        <position position="488"/>
    </location>
    <ligand>
        <name>Ca(2+)</name>
        <dbReference type="ChEBI" id="CHEBI:29108"/>
    </ligand>
</feature>
<gene>
    <name type="primary">Spata21</name>
</gene>
<reference key="1">
    <citation type="journal article" date="2005" name="Science">
        <title>The transcriptional landscape of the mammalian genome.</title>
        <authorList>
            <person name="Carninci P."/>
            <person name="Kasukawa T."/>
            <person name="Katayama S."/>
            <person name="Gough J."/>
            <person name="Frith M.C."/>
            <person name="Maeda N."/>
            <person name="Oyama R."/>
            <person name="Ravasi T."/>
            <person name="Lenhard B."/>
            <person name="Wells C."/>
            <person name="Kodzius R."/>
            <person name="Shimokawa K."/>
            <person name="Bajic V.B."/>
            <person name="Brenner S.E."/>
            <person name="Batalov S."/>
            <person name="Forrest A.R."/>
            <person name="Zavolan M."/>
            <person name="Davis M.J."/>
            <person name="Wilming L.G."/>
            <person name="Aidinis V."/>
            <person name="Allen J.E."/>
            <person name="Ambesi-Impiombato A."/>
            <person name="Apweiler R."/>
            <person name="Aturaliya R.N."/>
            <person name="Bailey T.L."/>
            <person name="Bansal M."/>
            <person name="Baxter L."/>
            <person name="Beisel K.W."/>
            <person name="Bersano T."/>
            <person name="Bono H."/>
            <person name="Chalk A.M."/>
            <person name="Chiu K.P."/>
            <person name="Choudhary V."/>
            <person name="Christoffels A."/>
            <person name="Clutterbuck D.R."/>
            <person name="Crowe M.L."/>
            <person name="Dalla E."/>
            <person name="Dalrymple B.P."/>
            <person name="de Bono B."/>
            <person name="Della Gatta G."/>
            <person name="di Bernardo D."/>
            <person name="Down T."/>
            <person name="Engstrom P."/>
            <person name="Fagiolini M."/>
            <person name="Faulkner G."/>
            <person name="Fletcher C.F."/>
            <person name="Fukushima T."/>
            <person name="Furuno M."/>
            <person name="Futaki S."/>
            <person name="Gariboldi M."/>
            <person name="Georgii-Hemming P."/>
            <person name="Gingeras T.R."/>
            <person name="Gojobori T."/>
            <person name="Green R.E."/>
            <person name="Gustincich S."/>
            <person name="Harbers M."/>
            <person name="Hayashi Y."/>
            <person name="Hensch T.K."/>
            <person name="Hirokawa N."/>
            <person name="Hill D."/>
            <person name="Huminiecki L."/>
            <person name="Iacono M."/>
            <person name="Ikeo K."/>
            <person name="Iwama A."/>
            <person name="Ishikawa T."/>
            <person name="Jakt M."/>
            <person name="Kanapin A."/>
            <person name="Katoh M."/>
            <person name="Kawasawa Y."/>
            <person name="Kelso J."/>
            <person name="Kitamura H."/>
            <person name="Kitano H."/>
            <person name="Kollias G."/>
            <person name="Krishnan S.P."/>
            <person name="Kruger A."/>
            <person name="Kummerfeld S.K."/>
            <person name="Kurochkin I.V."/>
            <person name="Lareau L.F."/>
            <person name="Lazarevic D."/>
            <person name="Lipovich L."/>
            <person name="Liu J."/>
            <person name="Liuni S."/>
            <person name="McWilliam S."/>
            <person name="Madan Babu M."/>
            <person name="Madera M."/>
            <person name="Marchionni L."/>
            <person name="Matsuda H."/>
            <person name="Matsuzawa S."/>
            <person name="Miki H."/>
            <person name="Mignone F."/>
            <person name="Miyake S."/>
            <person name="Morris K."/>
            <person name="Mottagui-Tabar S."/>
            <person name="Mulder N."/>
            <person name="Nakano N."/>
            <person name="Nakauchi H."/>
            <person name="Ng P."/>
            <person name="Nilsson R."/>
            <person name="Nishiguchi S."/>
            <person name="Nishikawa S."/>
            <person name="Nori F."/>
            <person name="Ohara O."/>
            <person name="Okazaki Y."/>
            <person name="Orlando V."/>
            <person name="Pang K.C."/>
            <person name="Pavan W.J."/>
            <person name="Pavesi G."/>
            <person name="Pesole G."/>
            <person name="Petrovsky N."/>
            <person name="Piazza S."/>
            <person name="Reed J."/>
            <person name="Reid J.F."/>
            <person name="Ring B.Z."/>
            <person name="Ringwald M."/>
            <person name="Rost B."/>
            <person name="Ruan Y."/>
            <person name="Salzberg S.L."/>
            <person name="Sandelin A."/>
            <person name="Schneider C."/>
            <person name="Schoenbach C."/>
            <person name="Sekiguchi K."/>
            <person name="Semple C.A."/>
            <person name="Seno S."/>
            <person name="Sessa L."/>
            <person name="Sheng Y."/>
            <person name="Shibata Y."/>
            <person name="Shimada H."/>
            <person name="Shimada K."/>
            <person name="Silva D."/>
            <person name="Sinclair B."/>
            <person name="Sperling S."/>
            <person name="Stupka E."/>
            <person name="Sugiura K."/>
            <person name="Sultana R."/>
            <person name="Takenaka Y."/>
            <person name="Taki K."/>
            <person name="Tammoja K."/>
            <person name="Tan S.L."/>
            <person name="Tang S."/>
            <person name="Taylor M.S."/>
            <person name="Tegner J."/>
            <person name="Teichmann S.A."/>
            <person name="Ueda H.R."/>
            <person name="van Nimwegen E."/>
            <person name="Verardo R."/>
            <person name="Wei C.L."/>
            <person name="Yagi K."/>
            <person name="Yamanishi H."/>
            <person name="Zabarovsky E."/>
            <person name="Zhu S."/>
            <person name="Zimmer A."/>
            <person name="Hide W."/>
            <person name="Bult C."/>
            <person name="Grimmond S.M."/>
            <person name="Teasdale R.D."/>
            <person name="Liu E.T."/>
            <person name="Brusic V."/>
            <person name="Quackenbush J."/>
            <person name="Wahlestedt C."/>
            <person name="Mattick J.S."/>
            <person name="Hume D.A."/>
            <person name="Kai C."/>
            <person name="Sasaki D."/>
            <person name="Tomaru Y."/>
            <person name="Fukuda S."/>
            <person name="Kanamori-Katayama M."/>
            <person name="Suzuki M."/>
            <person name="Aoki J."/>
            <person name="Arakawa T."/>
            <person name="Iida J."/>
            <person name="Imamura K."/>
            <person name="Itoh M."/>
            <person name="Kato T."/>
            <person name="Kawaji H."/>
            <person name="Kawagashira N."/>
            <person name="Kawashima T."/>
            <person name="Kojima M."/>
            <person name="Kondo S."/>
            <person name="Konno H."/>
            <person name="Nakano K."/>
            <person name="Ninomiya N."/>
            <person name="Nishio T."/>
            <person name="Okada M."/>
            <person name="Plessy C."/>
            <person name="Shibata K."/>
            <person name="Shiraki T."/>
            <person name="Suzuki S."/>
            <person name="Tagami M."/>
            <person name="Waki K."/>
            <person name="Watahiki A."/>
            <person name="Okamura-Oho Y."/>
            <person name="Suzuki H."/>
            <person name="Kawai J."/>
            <person name="Hayashizaki Y."/>
        </authorList>
    </citation>
    <scope>NUCLEOTIDE SEQUENCE [LARGE SCALE MRNA]</scope>
    <source>
        <strain>C57BL/6J</strain>
        <tissue>Testis</tissue>
    </source>
</reference>
<reference key="2">
    <citation type="journal article" date="2009" name="PLoS Biol.">
        <title>Lineage-specific biology revealed by a finished genome assembly of the mouse.</title>
        <authorList>
            <person name="Church D.M."/>
            <person name="Goodstadt L."/>
            <person name="Hillier L.W."/>
            <person name="Zody M.C."/>
            <person name="Goldstein S."/>
            <person name="She X."/>
            <person name="Bult C.J."/>
            <person name="Agarwala R."/>
            <person name="Cherry J.L."/>
            <person name="DiCuccio M."/>
            <person name="Hlavina W."/>
            <person name="Kapustin Y."/>
            <person name="Meric P."/>
            <person name="Maglott D."/>
            <person name="Birtle Z."/>
            <person name="Marques A.C."/>
            <person name="Graves T."/>
            <person name="Zhou S."/>
            <person name="Teague B."/>
            <person name="Potamousis K."/>
            <person name="Churas C."/>
            <person name="Place M."/>
            <person name="Herschleb J."/>
            <person name="Runnheim R."/>
            <person name="Forrest D."/>
            <person name="Amos-Landgraf J."/>
            <person name="Schwartz D.C."/>
            <person name="Cheng Z."/>
            <person name="Lindblad-Toh K."/>
            <person name="Eichler E.E."/>
            <person name="Ponting C.P."/>
        </authorList>
    </citation>
    <scope>NUCLEOTIDE SEQUENCE [LARGE SCALE GENOMIC DNA]</scope>
    <source>
        <strain>C57BL/6J</strain>
    </source>
</reference>
<reference key="3">
    <citation type="journal article" date="2004" name="Genome Res.">
        <title>The status, quality, and expansion of the NIH full-length cDNA project: the Mammalian Gene Collection (MGC).</title>
        <authorList>
            <consortium name="The MGC Project Team"/>
        </authorList>
    </citation>
    <scope>NUCLEOTIDE SEQUENCE [LARGE SCALE MRNA]</scope>
</reference>
<evidence type="ECO:0000250" key="1"/>
<evidence type="ECO:0000255" key="2">
    <source>
        <dbReference type="PROSITE-ProRule" id="PRU00448"/>
    </source>
</evidence>
<evidence type="ECO:0000256" key="3">
    <source>
        <dbReference type="SAM" id="MobiDB-lite"/>
    </source>
</evidence>
<comment type="function">
    <text evidence="1">Involved in the differentiation of haploid spermatids.</text>
</comment>
<keyword id="KW-0106">Calcium</keyword>
<keyword id="KW-0479">Metal-binding</keyword>
<keyword id="KW-1185">Reference proteome</keyword>
<dbReference type="EMBL" id="AK077155">
    <property type="protein sequence ID" value="BAC36647.1"/>
    <property type="molecule type" value="mRNA"/>
</dbReference>
<dbReference type="EMBL" id="AL645625">
    <property type="status" value="NOT_ANNOTATED_CDS"/>
    <property type="molecule type" value="Genomic_DNA"/>
</dbReference>
<dbReference type="EMBL" id="BC112427">
    <property type="protein sequence ID" value="AAI12428.1"/>
    <property type="molecule type" value="mRNA"/>
</dbReference>
<dbReference type="EMBL" id="BC113132">
    <property type="protein sequence ID" value="AAI13133.1"/>
    <property type="molecule type" value="mRNA"/>
</dbReference>
<dbReference type="CCDS" id="CCDS18863.1"/>
<dbReference type="RefSeq" id="NP_808535.1">
    <property type="nucleotide sequence ID" value="NM_177867.3"/>
</dbReference>
<dbReference type="SMR" id="Q8BHW6"/>
<dbReference type="STRING" id="10090.ENSMUSP00000053080"/>
<dbReference type="iPTMnet" id="Q8BHW6"/>
<dbReference type="PhosphoSitePlus" id="Q8BHW6"/>
<dbReference type="SwissPalm" id="Q8BHW6"/>
<dbReference type="PaxDb" id="10090-ENSMUSP00000053080"/>
<dbReference type="PeptideAtlas" id="Q8BHW6"/>
<dbReference type="ProteomicsDB" id="263333"/>
<dbReference type="Antibodypedia" id="47956">
    <property type="antibodies" value="62 antibodies from 14 providers"/>
</dbReference>
<dbReference type="DNASU" id="329972"/>
<dbReference type="Ensembl" id="ENSMUST00000051907.3">
    <property type="protein sequence ID" value="ENSMUSP00000053080.3"/>
    <property type="gene ID" value="ENSMUSG00000045004.4"/>
</dbReference>
<dbReference type="GeneID" id="329972"/>
<dbReference type="KEGG" id="mmu:329972"/>
<dbReference type="UCSC" id="uc008vnv.1">
    <property type="organism name" value="mouse"/>
</dbReference>
<dbReference type="AGR" id="MGI:3607787"/>
<dbReference type="CTD" id="374955"/>
<dbReference type="MGI" id="MGI:3607787">
    <property type="gene designation" value="Spata21"/>
</dbReference>
<dbReference type="VEuPathDB" id="HostDB:ENSMUSG00000045004"/>
<dbReference type="eggNOG" id="KOG0027">
    <property type="taxonomic scope" value="Eukaryota"/>
</dbReference>
<dbReference type="GeneTree" id="ENSGT00940000162494"/>
<dbReference type="HOGENOM" id="CLU_028005_0_0_1"/>
<dbReference type="InParanoid" id="Q8BHW6"/>
<dbReference type="OMA" id="PCIPLYP"/>
<dbReference type="OrthoDB" id="9834398at2759"/>
<dbReference type="PhylomeDB" id="Q8BHW6"/>
<dbReference type="TreeFam" id="TF328393"/>
<dbReference type="BioGRID-ORCS" id="329972">
    <property type="hits" value="5 hits in 76 CRISPR screens"/>
</dbReference>
<dbReference type="ChiTaRS" id="Spata21">
    <property type="organism name" value="mouse"/>
</dbReference>
<dbReference type="PRO" id="PR:Q8BHW6"/>
<dbReference type="Proteomes" id="UP000000589">
    <property type="component" value="Chromosome 4"/>
</dbReference>
<dbReference type="RNAct" id="Q8BHW6">
    <property type="molecule type" value="protein"/>
</dbReference>
<dbReference type="Bgee" id="ENSMUSG00000045004">
    <property type="expression patterns" value="Expressed in spermatid and 23 other cell types or tissues"/>
</dbReference>
<dbReference type="GO" id="GO:0005509">
    <property type="term" value="F:calcium ion binding"/>
    <property type="evidence" value="ECO:0007669"/>
    <property type="project" value="InterPro"/>
</dbReference>
<dbReference type="CDD" id="cd00051">
    <property type="entry name" value="EFh"/>
    <property type="match status" value="1"/>
</dbReference>
<dbReference type="Gene3D" id="1.10.238.10">
    <property type="entry name" value="EF-hand"/>
    <property type="match status" value="1"/>
</dbReference>
<dbReference type="InterPro" id="IPR011992">
    <property type="entry name" value="EF-hand-dom_pair"/>
</dbReference>
<dbReference type="InterPro" id="IPR018247">
    <property type="entry name" value="EF_Hand_1_Ca_BS"/>
</dbReference>
<dbReference type="InterPro" id="IPR002048">
    <property type="entry name" value="EF_hand_dom"/>
</dbReference>
<dbReference type="InterPro" id="IPR043520">
    <property type="entry name" value="SPT21"/>
</dbReference>
<dbReference type="PANTHER" id="PTHR47500">
    <property type="entry name" value="EF-HAND CALCIUM-BINDING DOMAIN-CONTAINING PROTEIN"/>
    <property type="match status" value="1"/>
</dbReference>
<dbReference type="PANTHER" id="PTHR47500:SF1">
    <property type="entry name" value="SPERMATOGENESIS-ASSOCIATED PROTEIN 21"/>
    <property type="match status" value="1"/>
</dbReference>
<dbReference type="SMART" id="SM00054">
    <property type="entry name" value="EFh"/>
    <property type="match status" value="1"/>
</dbReference>
<dbReference type="SUPFAM" id="SSF47473">
    <property type="entry name" value="EF-hand"/>
    <property type="match status" value="1"/>
</dbReference>
<dbReference type="PROSITE" id="PS00018">
    <property type="entry name" value="EF_HAND_1"/>
    <property type="match status" value="1"/>
</dbReference>
<dbReference type="PROSITE" id="PS50222">
    <property type="entry name" value="EF_HAND_2"/>
    <property type="match status" value="1"/>
</dbReference>
<name>SPT21_MOUSE</name>